<keyword id="KW-0378">Hydrolase</keyword>
<gene>
    <name type="ordered locus">BAA_1317</name>
</gene>
<feature type="chain" id="PRO_1000184945" description="Putative phosphoesterase BAA_1317">
    <location>
        <begin position="1"/>
        <end position="172"/>
    </location>
</feature>
<feature type="short sequence motif" description="HXTX 1" evidence="1">
    <location>
        <begin position="34"/>
        <end position="37"/>
    </location>
</feature>
<feature type="short sequence motif" description="HXTX 2" evidence="1">
    <location>
        <begin position="115"/>
        <end position="118"/>
    </location>
</feature>
<feature type="active site" description="Proton donor" evidence="1">
    <location>
        <position position="34"/>
    </location>
</feature>
<feature type="active site" description="Proton acceptor" evidence="1">
    <location>
        <position position="115"/>
    </location>
</feature>
<evidence type="ECO:0000255" key="1">
    <source>
        <dbReference type="HAMAP-Rule" id="MF_01444"/>
    </source>
</evidence>
<proteinExistence type="inferred from homology"/>
<dbReference type="EC" id="3.1.-.-" evidence="1"/>
<dbReference type="EMBL" id="CP001598">
    <property type="protein sequence ID" value="ACQ49241.1"/>
    <property type="molecule type" value="Genomic_DNA"/>
</dbReference>
<dbReference type="RefSeq" id="WP_000765879.1">
    <property type="nucleotide sequence ID" value="NC_012659.1"/>
</dbReference>
<dbReference type="SMR" id="C3P3S8"/>
<dbReference type="GeneID" id="45021242"/>
<dbReference type="KEGG" id="bai:BAA_1317"/>
<dbReference type="HOGENOM" id="CLU_132020_0_0_9"/>
<dbReference type="GO" id="GO:0016788">
    <property type="term" value="F:hydrolase activity, acting on ester bonds"/>
    <property type="evidence" value="ECO:0007669"/>
    <property type="project" value="UniProtKB-UniRule"/>
</dbReference>
<dbReference type="Gene3D" id="3.90.1140.10">
    <property type="entry name" value="Cyclic phosphodiesterase"/>
    <property type="match status" value="1"/>
</dbReference>
<dbReference type="HAMAP" id="MF_01444">
    <property type="entry name" value="2H_phosphoesterase_YjcG"/>
    <property type="match status" value="1"/>
</dbReference>
<dbReference type="InterPro" id="IPR050580">
    <property type="entry name" value="2H_phosphoesterase_YjcG-like"/>
</dbReference>
<dbReference type="InterPro" id="IPR009097">
    <property type="entry name" value="Cyclic_Pdiesterase"/>
</dbReference>
<dbReference type="InterPro" id="IPR022932">
    <property type="entry name" value="YjcG"/>
</dbReference>
<dbReference type="NCBIfam" id="NF010223">
    <property type="entry name" value="PRK13679.1"/>
    <property type="match status" value="1"/>
</dbReference>
<dbReference type="PANTHER" id="PTHR40037:SF1">
    <property type="entry name" value="PHOSPHOESTERASE SAOUHSC_00951-RELATED"/>
    <property type="match status" value="1"/>
</dbReference>
<dbReference type="PANTHER" id="PTHR40037">
    <property type="entry name" value="PHOSPHOESTERASE YJCG-RELATED"/>
    <property type="match status" value="1"/>
</dbReference>
<dbReference type="Pfam" id="PF13563">
    <property type="entry name" value="2_5_RNA_ligase2"/>
    <property type="match status" value="1"/>
</dbReference>
<dbReference type="SUPFAM" id="SSF55144">
    <property type="entry name" value="LigT-like"/>
    <property type="match status" value="1"/>
</dbReference>
<reference key="1">
    <citation type="submission" date="2009-04" db="EMBL/GenBank/DDBJ databases">
        <title>Genome sequence of Bacillus anthracis A0248.</title>
        <authorList>
            <person name="Dodson R.J."/>
            <person name="Munk A.C."/>
            <person name="Bruce D."/>
            <person name="Detter C."/>
            <person name="Tapia R."/>
            <person name="Sutton G."/>
            <person name="Sims D."/>
            <person name="Brettin T."/>
        </authorList>
    </citation>
    <scope>NUCLEOTIDE SEQUENCE [LARGE SCALE GENOMIC DNA]</scope>
    <source>
        <strain>A0248</strain>
    </source>
</reference>
<accession>C3P3S8</accession>
<protein>
    <recommendedName>
        <fullName evidence="1">Putative phosphoesterase BAA_1317</fullName>
        <ecNumber evidence="1">3.1.-.-</ecNumber>
    </recommendedName>
</protein>
<comment type="similarity">
    <text evidence="1">Belongs to the 2H phosphoesterase superfamily. YjcG family.</text>
</comment>
<organism>
    <name type="scientific">Bacillus anthracis (strain A0248)</name>
    <dbReference type="NCBI Taxonomy" id="592021"/>
    <lineage>
        <taxon>Bacteria</taxon>
        <taxon>Bacillati</taxon>
        <taxon>Bacillota</taxon>
        <taxon>Bacilli</taxon>
        <taxon>Bacillales</taxon>
        <taxon>Bacillaceae</taxon>
        <taxon>Bacillus</taxon>
        <taxon>Bacillus cereus group</taxon>
    </lineage>
</organism>
<name>Y1317_BACAA</name>
<sequence length="172" mass="19877">MKLGIVIFPSKMIQDKANGLRKRYDPHYALVPPHITLKTPFETQDEQLESIVNKLHTIASKTNPFTLHVGKVGSFAPVNNVIYFKVEKTPELTFLNEEMHSGFFTQEREYAFVPHLTIGQGLSDAEHADVLGRLRMKDFYYEQPIDRFHLLYQLENGTWTVHETFRLGKGNN</sequence>